<protein>
    <recommendedName>
        <fullName>Uncharacterized ABC transporter ATP-binding protein YurJ</fullName>
        <ecNumber>7.-.-.-</ecNumber>
    </recommendedName>
</protein>
<accession>O32151</accession>
<sequence>MASLTFEHVKKSYHSQLTVKDFDLDVKDKELLVLVGPSGCGKSTTLRMVAGLESISEGNLLIDGERVNDLPPKERDIAMVFQNYALYPHMTVFDNMAFGLKLRKMAKQEIAERVHAAARILEIEHLLKRKPKALSGGQRQRVALGRSIVREPKVFLMDEPLSNLDAKLRVTMRTEISKLHQRLEATIIYVTHDQTEAMTMGDRIVVMNEGEIQQVAKPHDIYHYPANLFVAGFIGSPGMNFLKGIIEQQHGELFFTNSSIRLHIPEEKAKRLKEKGYAGEQMIAGVRPEHITQMTGNDQLFDSVFQANVEVNENLGSELIVHVMAGDERLKVRLDGNTRIDAGDSIQLSVKMDHVVFFDAETEEAVY</sequence>
<evidence type="ECO:0000255" key="1">
    <source>
        <dbReference type="PROSITE-ProRule" id="PRU00434"/>
    </source>
</evidence>
<evidence type="ECO:0000305" key="2"/>
<comment type="similarity">
    <text evidence="2">Belongs to the ABC transporter superfamily.</text>
</comment>
<reference key="1">
    <citation type="journal article" date="1997" name="Nature">
        <title>The complete genome sequence of the Gram-positive bacterium Bacillus subtilis.</title>
        <authorList>
            <person name="Kunst F."/>
            <person name="Ogasawara N."/>
            <person name="Moszer I."/>
            <person name="Albertini A.M."/>
            <person name="Alloni G."/>
            <person name="Azevedo V."/>
            <person name="Bertero M.G."/>
            <person name="Bessieres P."/>
            <person name="Bolotin A."/>
            <person name="Borchert S."/>
            <person name="Borriss R."/>
            <person name="Boursier L."/>
            <person name="Brans A."/>
            <person name="Braun M."/>
            <person name="Brignell S.C."/>
            <person name="Bron S."/>
            <person name="Brouillet S."/>
            <person name="Bruschi C.V."/>
            <person name="Caldwell B."/>
            <person name="Capuano V."/>
            <person name="Carter N.M."/>
            <person name="Choi S.-K."/>
            <person name="Codani J.-J."/>
            <person name="Connerton I.F."/>
            <person name="Cummings N.J."/>
            <person name="Daniel R.A."/>
            <person name="Denizot F."/>
            <person name="Devine K.M."/>
            <person name="Duesterhoeft A."/>
            <person name="Ehrlich S.D."/>
            <person name="Emmerson P.T."/>
            <person name="Entian K.-D."/>
            <person name="Errington J."/>
            <person name="Fabret C."/>
            <person name="Ferrari E."/>
            <person name="Foulger D."/>
            <person name="Fritz C."/>
            <person name="Fujita M."/>
            <person name="Fujita Y."/>
            <person name="Fuma S."/>
            <person name="Galizzi A."/>
            <person name="Galleron N."/>
            <person name="Ghim S.-Y."/>
            <person name="Glaser P."/>
            <person name="Goffeau A."/>
            <person name="Golightly E.J."/>
            <person name="Grandi G."/>
            <person name="Guiseppi G."/>
            <person name="Guy B.J."/>
            <person name="Haga K."/>
            <person name="Haiech J."/>
            <person name="Harwood C.R."/>
            <person name="Henaut A."/>
            <person name="Hilbert H."/>
            <person name="Holsappel S."/>
            <person name="Hosono S."/>
            <person name="Hullo M.-F."/>
            <person name="Itaya M."/>
            <person name="Jones L.-M."/>
            <person name="Joris B."/>
            <person name="Karamata D."/>
            <person name="Kasahara Y."/>
            <person name="Klaerr-Blanchard M."/>
            <person name="Klein C."/>
            <person name="Kobayashi Y."/>
            <person name="Koetter P."/>
            <person name="Koningstein G."/>
            <person name="Krogh S."/>
            <person name="Kumano M."/>
            <person name="Kurita K."/>
            <person name="Lapidus A."/>
            <person name="Lardinois S."/>
            <person name="Lauber J."/>
            <person name="Lazarevic V."/>
            <person name="Lee S.-M."/>
            <person name="Levine A."/>
            <person name="Liu H."/>
            <person name="Masuda S."/>
            <person name="Mauel C."/>
            <person name="Medigue C."/>
            <person name="Medina N."/>
            <person name="Mellado R.P."/>
            <person name="Mizuno M."/>
            <person name="Moestl D."/>
            <person name="Nakai S."/>
            <person name="Noback M."/>
            <person name="Noone D."/>
            <person name="O'Reilly M."/>
            <person name="Ogawa K."/>
            <person name="Ogiwara A."/>
            <person name="Oudega B."/>
            <person name="Park S.-H."/>
            <person name="Parro V."/>
            <person name="Pohl T.M."/>
            <person name="Portetelle D."/>
            <person name="Porwollik S."/>
            <person name="Prescott A.M."/>
            <person name="Presecan E."/>
            <person name="Pujic P."/>
            <person name="Purnelle B."/>
            <person name="Rapoport G."/>
            <person name="Rey M."/>
            <person name="Reynolds S."/>
            <person name="Rieger M."/>
            <person name="Rivolta C."/>
            <person name="Rocha E."/>
            <person name="Roche B."/>
            <person name="Rose M."/>
            <person name="Sadaie Y."/>
            <person name="Sato T."/>
            <person name="Scanlan E."/>
            <person name="Schleich S."/>
            <person name="Schroeter R."/>
            <person name="Scoffone F."/>
            <person name="Sekiguchi J."/>
            <person name="Sekowska A."/>
            <person name="Seror S.J."/>
            <person name="Serror P."/>
            <person name="Shin B.-S."/>
            <person name="Soldo B."/>
            <person name="Sorokin A."/>
            <person name="Tacconi E."/>
            <person name="Takagi T."/>
            <person name="Takahashi H."/>
            <person name="Takemaru K."/>
            <person name="Takeuchi M."/>
            <person name="Tamakoshi A."/>
            <person name="Tanaka T."/>
            <person name="Terpstra P."/>
            <person name="Tognoni A."/>
            <person name="Tosato V."/>
            <person name="Uchiyama S."/>
            <person name="Vandenbol M."/>
            <person name="Vannier F."/>
            <person name="Vassarotti A."/>
            <person name="Viari A."/>
            <person name="Wambutt R."/>
            <person name="Wedler E."/>
            <person name="Wedler H."/>
            <person name="Weitzenegger T."/>
            <person name="Winters P."/>
            <person name="Wipat A."/>
            <person name="Yamamoto H."/>
            <person name="Yamane K."/>
            <person name="Yasumoto K."/>
            <person name="Yata K."/>
            <person name="Yoshida K."/>
            <person name="Yoshikawa H.-F."/>
            <person name="Zumstein E."/>
            <person name="Yoshikawa H."/>
            <person name="Danchin A."/>
        </authorList>
    </citation>
    <scope>NUCLEOTIDE SEQUENCE [LARGE SCALE GENOMIC DNA]</scope>
    <source>
        <strain>168</strain>
    </source>
</reference>
<organism>
    <name type="scientific">Bacillus subtilis (strain 168)</name>
    <dbReference type="NCBI Taxonomy" id="224308"/>
    <lineage>
        <taxon>Bacteria</taxon>
        <taxon>Bacillati</taxon>
        <taxon>Bacillota</taxon>
        <taxon>Bacilli</taxon>
        <taxon>Bacillales</taxon>
        <taxon>Bacillaceae</taxon>
        <taxon>Bacillus</taxon>
    </lineage>
</organism>
<keyword id="KW-0067">ATP-binding</keyword>
<keyword id="KW-0547">Nucleotide-binding</keyword>
<keyword id="KW-1185">Reference proteome</keyword>
<keyword id="KW-1278">Translocase</keyword>
<keyword id="KW-0813">Transport</keyword>
<dbReference type="EC" id="7.-.-.-"/>
<dbReference type="EMBL" id="AL009126">
    <property type="protein sequence ID" value="CAB15245.1"/>
    <property type="molecule type" value="Genomic_DNA"/>
</dbReference>
<dbReference type="PIR" id="A70018">
    <property type="entry name" value="A70018"/>
</dbReference>
<dbReference type="RefSeq" id="WP_003228630.1">
    <property type="nucleotide sequence ID" value="NZ_OZ025638.1"/>
</dbReference>
<dbReference type="SMR" id="O32151"/>
<dbReference type="FunCoup" id="O32151">
    <property type="interactions" value="548"/>
</dbReference>
<dbReference type="STRING" id="224308.BSU32550"/>
<dbReference type="TCDB" id="3.A.1.1.34">
    <property type="family name" value="the atp-binding cassette (abc) superfamily"/>
</dbReference>
<dbReference type="PaxDb" id="224308-BSU32550"/>
<dbReference type="EnsemblBacteria" id="CAB15245">
    <property type="protein sequence ID" value="CAB15245"/>
    <property type="gene ID" value="BSU_32550"/>
</dbReference>
<dbReference type="GeneID" id="937070"/>
<dbReference type="KEGG" id="bsu:BSU32550"/>
<dbReference type="PATRIC" id="fig|224308.179.peg.3525"/>
<dbReference type="eggNOG" id="COG3842">
    <property type="taxonomic scope" value="Bacteria"/>
</dbReference>
<dbReference type="InParanoid" id="O32151"/>
<dbReference type="OrthoDB" id="9802264at2"/>
<dbReference type="PhylomeDB" id="O32151"/>
<dbReference type="BioCyc" id="BSUB:BSU32550-MONOMER"/>
<dbReference type="Proteomes" id="UP000001570">
    <property type="component" value="Chromosome"/>
</dbReference>
<dbReference type="GO" id="GO:0055052">
    <property type="term" value="C:ATP-binding cassette (ABC) transporter complex, substrate-binding subunit-containing"/>
    <property type="evidence" value="ECO:0000318"/>
    <property type="project" value="GO_Central"/>
</dbReference>
<dbReference type="GO" id="GO:0140359">
    <property type="term" value="F:ABC-type transporter activity"/>
    <property type="evidence" value="ECO:0007669"/>
    <property type="project" value="InterPro"/>
</dbReference>
<dbReference type="GO" id="GO:0005524">
    <property type="term" value="F:ATP binding"/>
    <property type="evidence" value="ECO:0007669"/>
    <property type="project" value="UniProtKB-KW"/>
</dbReference>
<dbReference type="GO" id="GO:0016887">
    <property type="term" value="F:ATP hydrolysis activity"/>
    <property type="evidence" value="ECO:0007669"/>
    <property type="project" value="InterPro"/>
</dbReference>
<dbReference type="GO" id="GO:0008643">
    <property type="term" value="P:carbohydrate transport"/>
    <property type="evidence" value="ECO:0007669"/>
    <property type="project" value="InterPro"/>
</dbReference>
<dbReference type="CDD" id="cd03301">
    <property type="entry name" value="ABC_MalK_N"/>
    <property type="match status" value="1"/>
</dbReference>
<dbReference type="FunFam" id="3.40.50.300:FF:000042">
    <property type="entry name" value="Maltose/maltodextrin ABC transporter, ATP-binding protein"/>
    <property type="match status" value="1"/>
</dbReference>
<dbReference type="Gene3D" id="2.40.50.100">
    <property type="match status" value="1"/>
</dbReference>
<dbReference type="Gene3D" id="2.40.50.140">
    <property type="entry name" value="Nucleic acid-binding proteins"/>
    <property type="match status" value="1"/>
</dbReference>
<dbReference type="Gene3D" id="3.40.50.300">
    <property type="entry name" value="P-loop containing nucleotide triphosphate hydrolases"/>
    <property type="match status" value="1"/>
</dbReference>
<dbReference type="InterPro" id="IPR003593">
    <property type="entry name" value="AAA+_ATPase"/>
</dbReference>
<dbReference type="InterPro" id="IPR003439">
    <property type="entry name" value="ABC_transporter-like_ATP-bd"/>
</dbReference>
<dbReference type="InterPro" id="IPR017871">
    <property type="entry name" value="ABC_transporter-like_CS"/>
</dbReference>
<dbReference type="InterPro" id="IPR015855">
    <property type="entry name" value="ABC_transpr_MalK-like"/>
</dbReference>
<dbReference type="InterPro" id="IPR047641">
    <property type="entry name" value="ABC_transpr_MalK/UgpC-like"/>
</dbReference>
<dbReference type="InterPro" id="IPR008995">
    <property type="entry name" value="Mo/tungstate-bd_C_term_dom"/>
</dbReference>
<dbReference type="InterPro" id="IPR012340">
    <property type="entry name" value="NA-bd_OB-fold"/>
</dbReference>
<dbReference type="InterPro" id="IPR040582">
    <property type="entry name" value="OB_MalK-like"/>
</dbReference>
<dbReference type="InterPro" id="IPR027417">
    <property type="entry name" value="P-loop_NTPase"/>
</dbReference>
<dbReference type="InterPro" id="IPR005116">
    <property type="entry name" value="Transp-assoc_OB_typ1"/>
</dbReference>
<dbReference type="NCBIfam" id="NF008653">
    <property type="entry name" value="PRK11650.1"/>
    <property type="match status" value="1"/>
</dbReference>
<dbReference type="PANTHER" id="PTHR43875">
    <property type="entry name" value="MALTODEXTRIN IMPORT ATP-BINDING PROTEIN MSMX"/>
    <property type="match status" value="1"/>
</dbReference>
<dbReference type="PANTHER" id="PTHR43875:SF1">
    <property type="entry name" value="OSMOPROTECTIVE COMPOUNDS UPTAKE ATP-BINDING PROTEIN GGTA"/>
    <property type="match status" value="1"/>
</dbReference>
<dbReference type="Pfam" id="PF00005">
    <property type="entry name" value="ABC_tran"/>
    <property type="match status" value="1"/>
</dbReference>
<dbReference type="Pfam" id="PF17912">
    <property type="entry name" value="OB_MalK"/>
    <property type="match status" value="1"/>
</dbReference>
<dbReference type="Pfam" id="PF03459">
    <property type="entry name" value="TOBE"/>
    <property type="match status" value="1"/>
</dbReference>
<dbReference type="SMART" id="SM00382">
    <property type="entry name" value="AAA"/>
    <property type="match status" value="1"/>
</dbReference>
<dbReference type="SUPFAM" id="SSF50331">
    <property type="entry name" value="MOP-like"/>
    <property type="match status" value="1"/>
</dbReference>
<dbReference type="SUPFAM" id="SSF52540">
    <property type="entry name" value="P-loop containing nucleoside triphosphate hydrolases"/>
    <property type="match status" value="1"/>
</dbReference>
<dbReference type="PROSITE" id="PS00211">
    <property type="entry name" value="ABC_TRANSPORTER_1"/>
    <property type="match status" value="1"/>
</dbReference>
<dbReference type="PROSITE" id="PS50893">
    <property type="entry name" value="ABC_TRANSPORTER_2"/>
    <property type="match status" value="1"/>
</dbReference>
<feature type="chain" id="PRO_0000375895" description="Uncharacterized ABC transporter ATP-binding protein YurJ">
    <location>
        <begin position="1"/>
        <end position="367"/>
    </location>
</feature>
<feature type="domain" description="ABC transporter" evidence="1">
    <location>
        <begin position="4"/>
        <end position="234"/>
    </location>
</feature>
<feature type="binding site" evidence="1">
    <location>
        <begin position="36"/>
        <end position="43"/>
    </location>
    <ligand>
        <name>ATP</name>
        <dbReference type="ChEBI" id="CHEBI:30616"/>
    </ligand>
</feature>
<name>YURJ_BACSU</name>
<gene>
    <name type="primary">yurJ</name>
    <name type="ordered locus">BSU32550</name>
</gene>
<proteinExistence type="inferred from homology"/>